<sequence length="324" mass="36413">MKNFNLTHRIVMAPMARMRSYGNIPQPHVALYYCQRTTPGGLLISEATGVSETAMAYQNMPGIWRKEQIEAWKPIVDAVHSHGGIFFCQLWHAGRVSHQDCQPNGESPVSSTDKPFADDPSNEFTPPRRLRTDEIPTIINDFRLAARNATEAGFDGVEIHGAHGYLIDQFMKDSVNDRTDSYGGSLENRCRFALQVIEAVSKEIGPDRVGIRLSPFADYMESGDTDPKRLGLYMAKSLNRFEILYCHMIEPRMKTVSEIFECRESLTPMRNAFNGTFIVAGGYTREDGNKAVAEGRTDLVAYGRLFLANPDLPKRFELNAPLNK</sequence>
<keyword id="KW-0007">Acetylation</keyword>
<keyword id="KW-0285">Flavoprotein</keyword>
<keyword id="KW-0288">FMN</keyword>
<keyword id="KW-0521">NADP</keyword>
<keyword id="KW-0560">Oxidoreductase</keyword>
<keyword id="KW-1185">Reference proteome</keyword>
<protein>
    <recommendedName>
        <fullName>Putative 12-oxophytodienoate reductase-like protein 1</fullName>
        <ecNumber>1.3.1.-</ecNumber>
    </recommendedName>
</protein>
<proteinExistence type="evidence at transcript level"/>
<evidence type="ECO:0000250" key="1"/>
<evidence type="ECO:0000250" key="2">
    <source>
        <dbReference type="UniProtKB" id="Q8GYB8"/>
    </source>
</evidence>
<evidence type="ECO:0000256" key="3">
    <source>
        <dbReference type="SAM" id="MobiDB-lite"/>
    </source>
</evidence>
<evidence type="ECO:0000305" key="4"/>
<organism>
    <name type="scientific">Arabidopsis thaliana</name>
    <name type="common">Mouse-ear cress</name>
    <dbReference type="NCBI Taxonomy" id="3702"/>
    <lineage>
        <taxon>Eukaryota</taxon>
        <taxon>Viridiplantae</taxon>
        <taxon>Streptophyta</taxon>
        <taxon>Embryophyta</taxon>
        <taxon>Tracheophyta</taxon>
        <taxon>Spermatophyta</taxon>
        <taxon>Magnoliopsida</taxon>
        <taxon>eudicotyledons</taxon>
        <taxon>Gunneridae</taxon>
        <taxon>Pentapetalae</taxon>
        <taxon>rosids</taxon>
        <taxon>malvids</taxon>
        <taxon>Brassicales</taxon>
        <taxon>Brassicaceae</taxon>
        <taxon>Camelineae</taxon>
        <taxon>Arabidopsis</taxon>
    </lineage>
</organism>
<comment type="function">
    <text evidence="1">Putative oxophytodienoate reductase that may be involved in the biosynthesis or metabolism of oxylipin signaling molecules.</text>
</comment>
<comment type="cofactor">
    <cofactor evidence="1">
        <name>FMN</name>
        <dbReference type="ChEBI" id="CHEBI:58210"/>
    </cofactor>
</comment>
<comment type="similarity">
    <text evidence="4">Belongs to the NADH:flavin oxidoreductase/NADH oxidase family.</text>
</comment>
<comment type="sequence caution" evidence="4">
    <conflict type="erroneous termination">
        <sequence resource="EMBL-CDS" id="ABK28390"/>
    </conflict>
    <text>Extended C-terminus.</text>
</comment>
<comment type="sequence caution" evidence="4">
    <conflict type="erroneous initiation">
        <sequence resource="EMBL-CDS" id="BAC42416"/>
    </conflict>
    <text>Truncated N-terminus.</text>
</comment>
<name>OPRL1_ARATH</name>
<gene>
    <name type="ordered locus">At1g09400</name>
    <name type="ORF">F14J9.6</name>
</gene>
<accession>Q8GYA3</accession>
<accession>A0ME63</accession>
<accession>O80523</accession>
<dbReference type="EC" id="1.3.1.-"/>
<dbReference type="EMBL" id="AC003970">
    <property type="protein sequence ID" value="AAC33200.1"/>
    <property type="molecule type" value="Genomic_DNA"/>
</dbReference>
<dbReference type="EMBL" id="CP002684">
    <property type="protein sequence ID" value="AEE28437.1"/>
    <property type="molecule type" value="Genomic_DNA"/>
</dbReference>
<dbReference type="EMBL" id="DQ652831">
    <property type="protein sequence ID" value="ABK28390.1"/>
    <property type="status" value="ALT_SEQ"/>
    <property type="molecule type" value="mRNA"/>
</dbReference>
<dbReference type="EMBL" id="AK117769">
    <property type="protein sequence ID" value="BAC42416.1"/>
    <property type="status" value="ALT_INIT"/>
    <property type="molecule type" value="mRNA"/>
</dbReference>
<dbReference type="PIR" id="C86227">
    <property type="entry name" value="C86227"/>
</dbReference>
<dbReference type="RefSeq" id="NP_172411.1">
    <property type="nucleotide sequence ID" value="NM_100810.2"/>
</dbReference>
<dbReference type="SMR" id="Q8GYA3"/>
<dbReference type="BioGRID" id="22703">
    <property type="interactions" value="1"/>
</dbReference>
<dbReference type="FunCoup" id="Q8GYA3">
    <property type="interactions" value="101"/>
</dbReference>
<dbReference type="STRING" id="3702.Q8GYA3"/>
<dbReference type="iPTMnet" id="Q8GYA3"/>
<dbReference type="PaxDb" id="3702-AT1G09400.1"/>
<dbReference type="ProteomicsDB" id="249373"/>
<dbReference type="EnsemblPlants" id="AT1G09400.1">
    <property type="protein sequence ID" value="AT1G09400.1"/>
    <property type="gene ID" value="AT1G09400"/>
</dbReference>
<dbReference type="GeneID" id="837462"/>
<dbReference type="Gramene" id="AT1G09400.1">
    <property type="protein sequence ID" value="AT1G09400.1"/>
    <property type="gene ID" value="AT1G09400"/>
</dbReference>
<dbReference type="KEGG" id="ath:AT1G09400"/>
<dbReference type="Araport" id="AT1G09400"/>
<dbReference type="TAIR" id="AT1G09400"/>
<dbReference type="eggNOG" id="KOG0134">
    <property type="taxonomic scope" value="Eukaryota"/>
</dbReference>
<dbReference type="HOGENOM" id="CLU_012153_0_2_1"/>
<dbReference type="InParanoid" id="Q8GYA3"/>
<dbReference type="OMA" id="FQPMKIG"/>
<dbReference type="PhylomeDB" id="Q8GYA3"/>
<dbReference type="BioCyc" id="ARA:AT1G09400-MONOMER"/>
<dbReference type="PRO" id="PR:Q8GYA3"/>
<dbReference type="Proteomes" id="UP000006548">
    <property type="component" value="Chromosome 1"/>
</dbReference>
<dbReference type="ExpressionAtlas" id="Q8GYA3">
    <property type="expression patterns" value="baseline and differential"/>
</dbReference>
<dbReference type="GO" id="GO:0010181">
    <property type="term" value="F:FMN binding"/>
    <property type="evidence" value="ECO:0007669"/>
    <property type="project" value="InterPro"/>
</dbReference>
<dbReference type="GO" id="GO:0016491">
    <property type="term" value="F:oxidoreductase activity"/>
    <property type="evidence" value="ECO:0007669"/>
    <property type="project" value="UniProtKB-KW"/>
</dbReference>
<dbReference type="CDD" id="cd02933">
    <property type="entry name" value="OYE_like_FMN"/>
    <property type="match status" value="1"/>
</dbReference>
<dbReference type="FunFam" id="3.20.20.70:FF:000073">
    <property type="entry name" value="12-oxophytodienoate reductase 3"/>
    <property type="match status" value="1"/>
</dbReference>
<dbReference type="Gene3D" id="3.20.20.70">
    <property type="entry name" value="Aldolase class I"/>
    <property type="match status" value="1"/>
</dbReference>
<dbReference type="InterPro" id="IPR013785">
    <property type="entry name" value="Aldolase_TIM"/>
</dbReference>
<dbReference type="InterPro" id="IPR001155">
    <property type="entry name" value="OxRdtase_FMN_N"/>
</dbReference>
<dbReference type="InterPro" id="IPR045247">
    <property type="entry name" value="Oye-like"/>
</dbReference>
<dbReference type="PANTHER" id="PTHR22893:SF107">
    <property type="entry name" value="12-OXOPHYTODIENOATE REDUCTASE-LIKE PROTEIN 1-RELATED"/>
    <property type="match status" value="1"/>
</dbReference>
<dbReference type="PANTHER" id="PTHR22893">
    <property type="entry name" value="NADH OXIDOREDUCTASE-RELATED"/>
    <property type="match status" value="1"/>
</dbReference>
<dbReference type="Pfam" id="PF00724">
    <property type="entry name" value="Oxidored_FMN"/>
    <property type="match status" value="1"/>
</dbReference>
<dbReference type="SUPFAM" id="SSF51395">
    <property type="entry name" value="FMN-linked oxidoreductases"/>
    <property type="match status" value="1"/>
</dbReference>
<feature type="chain" id="PRO_0000194486" description="Putative 12-oxophytodienoate reductase-like protein 1">
    <location>
        <begin position="1"/>
        <end position="324"/>
    </location>
</feature>
<feature type="region of interest" description="Disordered" evidence="3">
    <location>
        <begin position="99"/>
        <end position="128"/>
    </location>
</feature>
<feature type="compositionally biased region" description="Polar residues" evidence="3">
    <location>
        <begin position="99"/>
        <end position="113"/>
    </location>
</feature>
<feature type="active site" description="Proton donor" evidence="1">
    <location>
        <position position="165"/>
    </location>
</feature>
<feature type="binding site" evidence="1">
    <location>
        <begin position="14"/>
        <end position="16"/>
    </location>
    <ligand>
        <name>FMN</name>
        <dbReference type="ChEBI" id="CHEBI:58210"/>
    </ligand>
</feature>
<feature type="binding site" evidence="1">
    <location>
        <position position="47"/>
    </location>
    <ligand>
        <name>FMN</name>
        <dbReference type="ChEBI" id="CHEBI:58210"/>
    </ligand>
</feature>
<feature type="binding site" evidence="1">
    <location>
        <position position="89"/>
    </location>
    <ligand>
        <name>FMN</name>
        <dbReference type="ChEBI" id="CHEBI:58210"/>
    </ligand>
</feature>
<feature type="binding site" evidence="1">
    <location>
        <begin position="160"/>
        <end position="163"/>
    </location>
    <ligand>
        <name>substrate</name>
    </ligand>
</feature>
<feature type="binding site" evidence="1">
    <location>
        <position position="212"/>
    </location>
    <ligand>
        <name>FMN</name>
        <dbReference type="ChEBI" id="CHEBI:58210"/>
    </ligand>
</feature>
<feature type="binding site" evidence="1">
    <location>
        <position position="252"/>
    </location>
    <ligand>
        <name>substrate</name>
    </ligand>
</feature>
<feature type="binding site" evidence="1">
    <location>
        <position position="282"/>
    </location>
    <ligand>
        <name>FMN</name>
        <dbReference type="ChEBI" id="CHEBI:58210"/>
    </ligand>
</feature>
<feature type="binding site" evidence="1">
    <location>
        <begin position="303"/>
        <end position="304"/>
    </location>
    <ligand>
        <name>FMN</name>
        <dbReference type="ChEBI" id="CHEBI:58210"/>
    </ligand>
</feature>
<feature type="modified residue" description="N-acetylmethionine" evidence="2">
    <location>
        <position position="1"/>
    </location>
</feature>
<reference key="1">
    <citation type="journal article" date="2000" name="Nature">
        <title>Sequence and analysis of chromosome 1 of the plant Arabidopsis thaliana.</title>
        <authorList>
            <person name="Theologis A."/>
            <person name="Ecker J.R."/>
            <person name="Palm C.J."/>
            <person name="Federspiel N.A."/>
            <person name="Kaul S."/>
            <person name="White O."/>
            <person name="Alonso J."/>
            <person name="Altafi H."/>
            <person name="Araujo R."/>
            <person name="Bowman C.L."/>
            <person name="Brooks S.Y."/>
            <person name="Buehler E."/>
            <person name="Chan A."/>
            <person name="Chao Q."/>
            <person name="Chen H."/>
            <person name="Cheuk R.F."/>
            <person name="Chin C.W."/>
            <person name="Chung M.K."/>
            <person name="Conn L."/>
            <person name="Conway A.B."/>
            <person name="Conway A.R."/>
            <person name="Creasy T.H."/>
            <person name="Dewar K."/>
            <person name="Dunn P."/>
            <person name="Etgu P."/>
            <person name="Feldblyum T.V."/>
            <person name="Feng J.-D."/>
            <person name="Fong B."/>
            <person name="Fujii C.Y."/>
            <person name="Gill J.E."/>
            <person name="Goldsmith A.D."/>
            <person name="Haas B."/>
            <person name="Hansen N.F."/>
            <person name="Hughes B."/>
            <person name="Huizar L."/>
            <person name="Hunter J.L."/>
            <person name="Jenkins J."/>
            <person name="Johnson-Hopson C."/>
            <person name="Khan S."/>
            <person name="Khaykin E."/>
            <person name="Kim C.J."/>
            <person name="Koo H.L."/>
            <person name="Kremenetskaia I."/>
            <person name="Kurtz D.B."/>
            <person name="Kwan A."/>
            <person name="Lam B."/>
            <person name="Langin-Hooper S."/>
            <person name="Lee A."/>
            <person name="Lee J.M."/>
            <person name="Lenz C.A."/>
            <person name="Li J.H."/>
            <person name="Li Y.-P."/>
            <person name="Lin X."/>
            <person name="Liu S.X."/>
            <person name="Liu Z.A."/>
            <person name="Luros J.S."/>
            <person name="Maiti R."/>
            <person name="Marziali A."/>
            <person name="Militscher J."/>
            <person name="Miranda M."/>
            <person name="Nguyen M."/>
            <person name="Nierman W.C."/>
            <person name="Osborne B.I."/>
            <person name="Pai G."/>
            <person name="Peterson J."/>
            <person name="Pham P.K."/>
            <person name="Rizzo M."/>
            <person name="Rooney T."/>
            <person name="Rowley D."/>
            <person name="Sakano H."/>
            <person name="Salzberg S.L."/>
            <person name="Schwartz J.R."/>
            <person name="Shinn P."/>
            <person name="Southwick A.M."/>
            <person name="Sun H."/>
            <person name="Tallon L.J."/>
            <person name="Tambunga G."/>
            <person name="Toriumi M.J."/>
            <person name="Town C.D."/>
            <person name="Utterback T."/>
            <person name="Van Aken S."/>
            <person name="Vaysberg M."/>
            <person name="Vysotskaia V.S."/>
            <person name="Walker M."/>
            <person name="Wu D."/>
            <person name="Yu G."/>
            <person name="Fraser C.M."/>
            <person name="Venter J.C."/>
            <person name="Davis R.W."/>
        </authorList>
    </citation>
    <scope>NUCLEOTIDE SEQUENCE [LARGE SCALE GENOMIC DNA]</scope>
    <source>
        <strain>cv. Columbia</strain>
    </source>
</reference>
<reference key="2">
    <citation type="journal article" date="2017" name="Plant J.">
        <title>Araport11: a complete reannotation of the Arabidopsis thaliana reference genome.</title>
        <authorList>
            <person name="Cheng C.Y."/>
            <person name="Krishnakumar V."/>
            <person name="Chan A.P."/>
            <person name="Thibaud-Nissen F."/>
            <person name="Schobel S."/>
            <person name="Town C.D."/>
        </authorList>
    </citation>
    <scope>GENOME REANNOTATION</scope>
    <source>
        <strain>cv. Columbia</strain>
    </source>
</reference>
<reference key="3">
    <citation type="journal article" date="2006" name="Plant Biotechnol. J.">
        <title>Simultaneous high-throughput recombinational cloning of open reading frames in closed and open configurations.</title>
        <authorList>
            <person name="Underwood B.A."/>
            <person name="Vanderhaeghen R."/>
            <person name="Whitford R."/>
            <person name="Town C.D."/>
            <person name="Hilson P."/>
        </authorList>
    </citation>
    <scope>NUCLEOTIDE SEQUENCE [LARGE SCALE MRNA]</scope>
    <source>
        <strain>cv. Columbia</strain>
    </source>
</reference>
<reference key="4">
    <citation type="journal article" date="2002" name="Science">
        <title>Functional annotation of a full-length Arabidopsis cDNA collection.</title>
        <authorList>
            <person name="Seki M."/>
            <person name="Narusaka M."/>
            <person name="Kamiya A."/>
            <person name="Ishida J."/>
            <person name="Satou M."/>
            <person name="Sakurai T."/>
            <person name="Nakajima M."/>
            <person name="Enju A."/>
            <person name="Akiyama K."/>
            <person name="Oono Y."/>
            <person name="Muramatsu M."/>
            <person name="Hayashizaki Y."/>
            <person name="Kawai J."/>
            <person name="Carninci P."/>
            <person name="Itoh M."/>
            <person name="Ishii Y."/>
            <person name="Arakawa T."/>
            <person name="Shibata K."/>
            <person name="Shinagawa A."/>
            <person name="Shinozaki K."/>
        </authorList>
    </citation>
    <scope>NUCLEOTIDE SEQUENCE [LARGE SCALE MRNA] OF 106-324</scope>
</reference>